<name>KXD1_VANPO</name>
<sequence length="265" mass="29006">MSSDGEEGSFEGSQLVSQSPSINSQTYAIPIPEGMLDQLDISSSSSSAGGRDDEDEEDDDADVDVGVGSECLVGVTGQDRLIIGSGDDSDNGDGDEVHDNAHATSDVSSTAELNHVCSEETEDMDNVDEGLLDDIMNNTGGGGFVNGFEFHESEPMFDVSKYVFETLIQAINSADFSESLAFQTKTSAVINAKSLELKQLINMSKDRLVDLQDKFEKGVQTSNRIKRNLKMSREKIQFLNDEFRTNYPIEFNQARDKIIERTIDS</sequence>
<gene>
    <name type="primary">KXD1</name>
    <name type="ORF">Kpol_1002p55</name>
</gene>
<organism>
    <name type="scientific">Vanderwaltozyma polyspora (strain ATCC 22028 / DSM 70294 / BCRC 21397 / CBS 2163 / NBRC 10782 / NRRL Y-8283 / UCD 57-17)</name>
    <name type="common">Kluyveromyces polysporus</name>
    <dbReference type="NCBI Taxonomy" id="436907"/>
    <lineage>
        <taxon>Eukaryota</taxon>
        <taxon>Fungi</taxon>
        <taxon>Dikarya</taxon>
        <taxon>Ascomycota</taxon>
        <taxon>Saccharomycotina</taxon>
        <taxon>Saccharomycetes</taxon>
        <taxon>Saccharomycetales</taxon>
        <taxon>Saccharomycetaceae</taxon>
        <taxon>Vanderwaltozyma</taxon>
    </lineage>
</organism>
<feature type="chain" id="PRO_0000410669" description="Biogenesis of lysosome-related organelles complex 1 subunit KXD1">
    <location>
        <begin position="1"/>
        <end position="265"/>
    </location>
</feature>
<feature type="region of interest" description="Disordered" evidence="3">
    <location>
        <begin position="1"/>
        <end position="63"/>
    </location>
</feature>
<feature type="region of interest" description="Disordered" evidence="3">
    <location>
        <begin position="79"/>
        <end position="111"/>
    </location>
</feature>
<feature type="coiled-coil region" evidence="2">
    <location>
        <begin position="196"/>
        <end position="245"/>
    </location>
</feature>
<feature type="compositionally biased region" description="Polar residues" evidence="3">
    <location>
        <begin position="14"/>
        <end position="27"/>
    </location>
</feature>
<feature type="compositionally biased region" description="Acidic residues" evidence="3">
    <location>
        <begin position="52"/>
        <end position="63"/>
    </location>
</feature>
<feature type="compositionally biased region" description="Polar residues" evidence="3">
    <location>
        <begin position="102"/>
        <end position="111"/>
    </location>
</feature>
<protein>
    <recommendedName>
        <fullName>Biogenesis of lysosome-related organelles complex 1 subunit KXD1</fullName>
        <shortName>BLOC-1 subunit KXD1</shortName>
    </recommendedName>
    <alternativeName>
        <fullName>KxDL homolog</fullName>
    </alternativeName>
</protein>
<dbReference type="EMBL" id="DS480379">
    <property type="protein sequence ID" value="EDO19408.1"/>
    <property type="molecule type" value="Genomic_DNA"/>
</dbReference>
<dbReference type="RefSeq" id="XP_001647266.1">
    <property type="nucleotide sequence ID" value="XM_001647216.1"/>
</dbReference>
<dbReference type="FunCoup" id="A7TE86">
    <property type="interactions" value="101"/>
</dbReference>
<dbReference type="STRING" id="436907.A7TE86"/>
<dbReference type="GeneID" id="5547758"/>
<dbReference type="KEGG" id="vpo:Kpol_1002p55"/>
<dbReference type="eggNOG" id="ENOG502S1H5">
    <property type="taxonomic scope" value="Eukaryota"/>
</dbReference>
<dbReference type="HOGENOM" id="CLU_099155_0_0_1"/>
<dbReference type="InParanoid" id="A7TE86"/>
<dbReference type="OrthoDB" id="4089816at2759"/>
<dbReference type="PhylomeDB" id="A7TE86"/>
<dbReference type="Proteomes" id="UP000000267">
    <property type="component" value="Unassembled WGS sequence"/>
</dbReference>
<dbReference type="GO" id="GO:0031083">
    <property type="term" value="C:BLOC-1 complex"/>
    <property type="evidence" value="ECO:0007669"/>
    <property type="project" value="EnsemblFungi"/>
</dbReference>
<dbReference type="GO" id="GO:0005768">
    <property type="term" value="C:endosome"/>
    <property type="evidence" value="ECO:0007669"/>
    <property type="project" value="UniProtKB-SubCell"/>
</dbReference>
<dbReference type="GO" id="GO:0007032">
    <property type="term" value="P:endosome organization"/>
    <property type="evidence" value="ECO:0007669"/>
    <property type="project" value="EnsemblFungi"/>
</dbReference>
<dbReference type="GO" id="GO:0032880">
    <property type="term" value="P:regulation of protein localization"/>
    <property type="evidence" value="ECO:0007669"/>
    <property type="project" value="EnsemblFungi"/>
</dbReference>
<dbReference type="InterPro" id="IPR051390">
    <property type="entry name" value="BLOC-1_subunit_KXD1"/>
</dbReference>
<dbReference type="InterPro" id="IPR019371">
    <property type="entry name" value="KxDL_dom"/>
</dbReference>
<dbReference type="PANTHER" id="PTHR37787">
    <property type="entry name" value="BIOGENESIS OF LYSOSOME-RELATED ORGANELLES COMPLEX 1 SUBUNIT KXD1"/>
    <property type="match status" value="1"/>
</dbReference>
<dbReference type="PANTHER" id="PTHR37787:SF1">
    <property type="entry name" value="BIOGENESIS OF LYSOSOME-RELATED ORGANELLES COMPLEX 1 SUBUNIT KXD1"/>
    <property type="match status" value="1"/>
</dbReference>
<dbReference type="Pfam" id="PF10241">
    <property type="entry name" value="KxDL"/>
    <property type="match status" value="1"/>
</dbReference>
<comment type="function">
    <text evidence="1">Component of the biogenesis of lysosome-related organelles complex-1 (BLOC-1) involved in endosomal cargo sorting.</text>
</comment>
<comment type="subunit">
    <text evidence="1">Component of the biogenesis of lysosome-related organelles complex-1 (BLOC-1).</text>
</comment>
<comment type="subcellular location">
    <subcellularLocation>
        <location evidence="1">Endosome</location>
    </subcellularLocation>
</comment>
<comment type="similarity">
    <text evidence="4">Belongs to the KXD1 family.</text>
</comment>
<proteinExistence type="inferred from homology"/>
<evidence type="ECO:0000250" key="1"/>
<evidence type="ECO:0000255" key="2"/>
<evidence type="ECO:0000256" key="3">
    <source>
        <dbReference type="SAM" id="MobiDB-lite"/>
    </source>
</evidence>
<evidence type="ECO:0000305" key="4"/>
<keyword id="KW-0175">Coiled coil</keyword>
<keyword id="KW-0967">Endosome</keyword>
<keyword id="KW-1185">Reference proteome</keyword>
<keyword id="KW-0813">Transport</keyword>
<accession>A7TE86</accession>
<reference key="1">
    <citation type="journal article" date="2007" name="Proc. Natl. Acad. Sci. U.S.A.">
        <title>Independent sorting-out of thousands of duplicated gene pairs in two yeast species descended from a whole-genome duplication.</title>
        <authorList>
            <person name="Scannell D.R."/>
            <person name="Frank A.C."/>
            <person name="Conant G.C."/>
            <person name="Byrne K.P."/>
            <person name="Woolfit M."/>
            <person name="Wolfe K.H."/>
        </authorList>
    </citation>
    <scope>NUCLEOTIDE SEQUENCE [LARGE SCALE GENOMIC DNA]</scope>
    <source>
        <strain>ATCC 22028 / DSM 70294 / BCRC 21397 / CBS 2163 / NBRC 10782 / NRRL Y-8283 / UCD 57-17</strain>
    </source>
</reference>